<comment type="function">
    <text evidence="1">The glycine cleavage system catalyzes the degradation of glycine. The H protein shuttles the methylamine group of glycine from the P protein to the T protein.</text>
</comment>
<comment type="cofactor">
    <cofactor evidence="1">
        <name>(R)-lipoate</name>
        <dbReference type="ChEBI" id="CHEBI:83088"/>
    </cofactor>
    <text evidence="1">Binds 1 lipoyl cofactor covalently.</text>
</comment>
<comment type="subunit">
    <text evidence="1">The glycine cleavage system is composed of four proteins: P, T, L and H.</text>
</comment>
<comment type="similarity">
    <text evidence="1">Belongs to the GcvH family.</text>
</comment>
<evidence type="ECO:0000255" key="1">
    <source>
        <dbReference type="HAMAP-Rule" id="MF_00272"/>
    </source>
</evidence>
<evidence type="ECO:0000255" key="2">
    <source>
        <dbReference type="PROSITE-ProRule" id="PRU01066"/>
    </source>
</evidence>
<feature type="chain" id="PRO_0000166264" description="Glycine cleavage system H protein">
    <location>
        <begin position="1"/>
        <end position="126"/>
    </location>
</feature>
<feature type="domain" description="Lipoyl-binding" evidence="2">
    <location>
        <begin position="21"/>
        <end position="103"/>
    </location>
</feature>
<feature type="modified residue" description="N6-lipoyllysine" evidence="1">
    <location>
        <position position="62"/>
    </location>
</feature>
<dbReference type="EMBL" id="BA000032">
    <property type="protein sequence ID" value="BAC62145.1"/>
    <property type="molecule type" value="Genomic_DNA"/>
</dbReference>
<dbReference type="RefSeq" id="NP_800312.1">
    <property type="nucleotide sequence ID" value="NC_004605.1"/>
</dbReference>
<dbReference type="RefSeq" id="WP_005454126.1">
    <property type="nucleotide sequence ID" value="NC_004605.1"/>
</dbReference>
<dbReference type="SMR" id="Q87I04"/>
<dbReference type="GeneID" id="1191491"/>
<dbReference type="KEGG" id="vpa:VPA0802"/>
<dbReference type="PATRIC" id="fig|223926.6.peg.3733"/>
<dbReference type="eggNOG" id="COG0509">
    <property type="taxonomic scope" value="Bacteria"/>
</dbReference>
<dbReference type="HOGENOM" id="CLU_097408_2_0_6"/>
<dbReference type="Proteomes" id="UP000002493">
    <property type="component" value="Chromosome 2"/>
</dbReference>
<dbReference type="GO" id="GO:0005829">
    <property type="term" value="C:cytosol"/>
    <property type="evidence" value="ECO:0007669"/>
    <property type="project" value="TreeGrafter"/>
</dbReference>
<dbReference type="GO" id="GO:0005960">
    <property type="term" value="C:glycine cleavage complex"/>
    <property type="evidence" value="ECO:0007669"/>
    <property type="project" value="InterPro"/>
</dbReference>
<dbReference type="GO" id="GO:0019464">
    <property type="term" value="P:glycine decarboxylation via glycine cleavage system"/>
    <property type="evidence" value="ECO:0007669"/>
    <property type="project" value="UniProtKB-UniRule"/>
</dbReference>
<dbReference type="CDD" id="cd06848">
    <property type="entry name" value="GCS_H"/>
    <property type="match status" value="1"/>
</dbReference>
<dbReference type="FunFam" id="2.40.50.100:FF:000011">
    <property type="entry name" value="Glycine cleavage system H protein"/>
    <property type="match status" value="1"/>
</dbReference>
<dbReference type="Gene3D" id="2.40.50.100">
    <property type="match status" value="1"/>
</dbReference>
<dbReference type="HAMAP" id="MF_00272">
    <property type="entry name" value="GcvH"/>
    <property type="match status" value="1"/>
</dbReference>
<dbReference type="InterPro" id="IPR000089">
    <property type="entry name" value="Biotin_lipoyl"/>
</dbReference>
<dbReference type="InterPro" id="IPR002930">
    <property type="entry name" value="GCV_H"/>
</dbReference>
<dbReference type="InterPro" id="IPR033753">
    <property type="entry name" value="GCV_H/Fam206"/>
</dbReference>
<dbReference type="InterPro" id="IPR017453">
    <property type="entry name" value="GCV_H_sub"/>
</dbReference>
<dbReference type="InterPro" id="IPR011053">
    <property type="entry name" value="Single_hybrid_motif"/>
</dbReference>
<dbReference type="NCBIfam" id="TIGR00527">
    <property type="entry name" value="gcvH"/>
    <property type="match status" value="1"/>
</dbReference>
<dbReference type="NCBIfam" id="NF002270">
    <property type="entry name" value="PRK01202.1"/>
    <property type="match status" value="1"/>
</dbReference>
<dbReference type="PANTHER" id="PTHR11715">
    <property type="entry name" value="GLYCINE CLEAVAGE SYSTEM H PROTEIN"/>
    <property type="match status" value="1"/>
</dbReference>
<dbReference type="PANTHER" id="PTHR11715:SF3">
    <property type="entry name" value="GLYCINE CLEAVAGE SYSTEM H PROTEIN-RELATED"/>
    <property type="match status" value="1"/>
</dbReference>
<dbReference type="Pfam" id="PF01597">
    <property type="entry name" value="GCV_H"/>
    <property type="match status" value="1"/>
</dbReference>
<dbReference type="SUPFAM" id="SSF51230">
    <property type="entry name" value="Single hybrid motif"/>
    <property type="match status" value="1"/>
</dbReference>
<dbReference type="PROSITE" id="PS50968">
    <property type="entry name" value="BIOTINYL_LIPOYL"/>
    <property type="match status" value="1"/>
</dbReference>
<accession>Q87I04</accession>
<gene>
    <name evidence="1" type="primary">gcvH</name>
    <name type="ordered locus">VPA0802</name>
</gene>
<name>GCSH_VIBPA</name>
<reference key="1">
    <citation type="journal article" date="2003" name="Lancet">
        <title>Genome sequence of Vibrio parahaemolyticus: a pathogenic mechanism distinct from that of V. cholerae.</title>
        <authorList>
            <person name="Makino K."/>
            <person name="Oshima K."/>
            <person name="Kurokawa K."/>
            <person name="Yokoyama K."/>
            <person name="Uda T."/>
            <person name="Tagomori K."/>
            <person name="Iijima Y."/>
            <person name="Najima M."/>
            <person name="Nakano M."/>
            <person name="Yamashita A."/>
            <person name="Kubota Y."/>
            <person name="Kimura S."/>
            <person name="Yasunaga T."/>
            <person name="Honda T."/>
            <person name="Shinagawa H."/>
            <person name="Hattori M."/>
            <person name="Iida T."/>
        </authorList>
    </citation>
    <scope>NUCLEOTIDE SEQUENCE [LARGE SCALE GENOMIC DNA]</scope>
    <source>
        <strain>RIMD 2210633</strain>
    </source>
</reference>
<sequence>MDKTLKFTDSHEWVRDNGDGTVTIGISEHAQEMLGDVVFVDLPDVEDEVEAGESFSLVESVKAASDIYSPVTGEVVEINEELEDSPELINEEPYEGGWIVKVKLSDPSELDDLKDAEEYLSSIEEE</sequence>
<protein>
    <recommendedName>
        <fullName evidence="1">Glycine cleavage system H protein</fullName>
    </recommendedName>
</protein>
<proteinExistence type="inferred from homology"/>
<keyword id="KW-0450">Lipoyl</keyword>
<organism>
    <name type="scientific">Vibrio parahaemolyticus serotype O3:K6 (strain RIMD 2210633)</name>
    <dbReference type="NCBI Taxonomy" id="223926"/>
    <lineage>
        <taxon>Bacteria</taxon>
        <taxon>Pseudomonadati</taxon>
        <taxon>Pseudomonadota</taxon>
        <taxon>Gammaproteobacteria</taxon>
        <taxon>Vibrionales</taxon>
        <taxon>Vibrionaceae</taxon>
        <taxon>Vibrio</taxon>
    </lineage>
</organism>